<reference key="1">
    <citation type="journal article" date="2009" name="PLoS Genet.">
        <title>Organised genome dynamics in the Escherichia coli species results in highly diverse adaptive paths.</title>
        <authorList>
            <person name="Touchon M."/>
            <person name="Hoede C."/>
            <person name="Tenaillon O."/>
            <person name="Barbe V."/>
            <person name="Baeriswyl S."/>
            <person name="Bidet P."/>
            <person name="Bingen E."/>
            <person name="Bonacorsi S."/>
            <person name="Bouchier C."/>
            <person name="Bouvet O."/>
            <person name="Calteau A."/>
            <person name="Chiapello H."/>
            <person name="Clermont O."/>
            <person name="Cruveiller S."/>
            <person name="Danchin A."/>
            <person name="Diard M."/>
            <person name="Dossat C."/>
            <person name="Karoui M.E."/>
            <person name="Frapy E."/>
            <person name="Garry L."/>
            <person name="Ghigo J.M."/>
            <person name="Gilles A.M."/>
            <person name="Johnson J."/>
            <person name="Le Bouguenec C."/>
            <person name="Lescat M."/>
            <person name="Mangenot S."/>
            <person name="Martinez-Jehanne V."/>
            <person name="Matic I."/>
            <person name="Nassif X."/>
            <person name="Oztas S."/>
            <person name="Petit M.A."/>
            <person name="Pichon C."/>
            <person name="Rouy Z."/>
            <person name="Ruf C.S."/>
            <person name="Schneider D."/>
            <person name="Tourret J."/>
            <person name="Vacherie B."/>
            <person name="Vallenet D."/>
            <person name="Medigue C."/>
            <person name="Rocha E.P.C."/>
            <person name="Denamur E."/>
        </authorList>
    </citation>
    <scope>NUCLEOTIDE SEQUENCE [LARGE SCALE GENOMIC DNA]</scope>
    <source>
        <strain>S88 / ExPEC</strain>
    </source>
</reference>
<comment type="similarity">
    <text evidence="1">Belongs to the DsrB family.</text>
</comment>
<name>DSRB_ECO45</name>
<evidence type="ECO:0000255" key="1">
    <source>
        <dbReference type="HAMAP-Rule" id="MF_01549"/>
    </source>
</evidence>
<gene>
    <name evidence="1" type="primary">dsrB</name>
    <name type="ordered locus">ECS88_2006</name>
</gene>
<sequence length="62" mass="6946">MKVNDRVTVKTDGGPRRPGVVLAVEEFSEGTMYLVSLEDYPLGIWFFNEAGHQDGIFVEKAE</sequence>
<accession>B7MCK8</accession>
<organism>
    <name type="scientific">Escherichia coli O45:K1 (strain S88 / ExPEC)</name>
    <dbReference type="NCBI Taxonomy" id="585035"/>
    <lineage>
        <taxon>Bacteria</taxon>
        <taxon>Pseudomonadati</taxon>
        <taxon>Pseudomonadota</taxon>
        <taxon>Gammaproteobacteria</taxon>
        <taxon>Enterobacterales</taxon>
        <taxon>Enterobacteriaceae</taxon>
        <taxon>Escherichia</taxon>
    </lineage>
</organism>
<proteinExistence type="inferred from homology"/>
<keyword id="KW-1185">Reference proteome</keyword>
<protein>
    <recommendedName>
        <fullName evidence="1">Protein DsrB</fullName>
    </recommendedName>
</protein>
<feature type="chain" id="PRO_1000146846" description="Protein DsrB">
    <location>
        <begin position="1"/>
        <end position="62"/>
    </location>
</feature>
<dbReference type="EMBL" id="CU928161">
    <property type="protein sequence ID" value="CAR03305.1"/>
    <property type="molecule type" value="Genomic_DNA"/>
</dbReference>
<dbReference type="RefSeq" id="WP_000867217.1">
    <property type="nucleotide sequence ID" value="NC_011742.1"/>
</dbReference>
<dbReference type="SMR" id="B7MCK8"/>
<dbReference type="GeneID" id="93775233"/>
<dbReference type="KEGG" id="ecz:ECS88_2006"/>
<dbReference type="HOGENOM" id="CLU_189289_0_0_6"/>
<dbReference type="Proteomes" id="UP000000747">
    <property type="component" value="Chromosome"/>
</dbReference>
<dbReference type="HAMAP" id="MF_01549">
    <property type="entry name" value="DsrB"/>
    <property type="match status" value="1"/>
</dbReference>
<dbReference type="InterPro" id="IPR019717">
    <property type="entry name" value="Dextransucrase_DSRB"/>
</dbReference>
<dbReference type="NCBIfam" id="NF007981">
    <property type="entry name" value="PRK10708.1"/>
    <property type="match status" value="1"/>
</dbReference>
<dbReference type="Pfam" id="PF10781">
    <property type="entry name" value="DSRB"/>
    <property type="match status" value="1"/>
</dbReference>